<reference key="1">
    <citation type="journal article" date="1997" name="Nature">
        <title>Genomic sequence of a Lyme disease spirochaete, Borrelia burgdorferi.</title>
        <authorList>
            <person name="Fraser C.M."/>
            <person name="Casjens S."/>
            <person name="Huang W.M."/>
            <person name="Sutton G.G."/>
            <person name="Clayton R.A."/>
            <person name="Lathigra R."/>
            <person name="White O."/>
            <person name="Ketchum K.A."/>
            <person name="Dodson R.J."/>
            <person name="Hickey E.K."/>
            <person name="Gwinn M.L."/>
            <person name="Dougherty B.A."/>
            <person name="Tomb J.-F."/>
            <person name="Fleischmann R.D."/>
            <person name="Richardson D.L."/>
            <person name="Peterson J.D."/>
            <person name="Kerlavage A.R."/>
            <person name="Quackenbush J."/>
            <person name="Salzberg S.L."/>
            <person name="Hanson M."/>
            <person name="van Vugt R."/>
            <person name="Palmer N."/>
            <person name="Adams M.D."/>
            <person name="Gocayne J.D."/>
            <person name="Weidman J.F."/>
            <person name="Utterback T.R."/>
            <person name="Watthey L."/>
            <person name="McDonald L.A."/>
            <person name="Artiach P."/>
            <person name="Bowman C."/>
            <person name="Garland S.A."/>
            <person name="Fujii C."/>
            <person name="Cotton M.D."/>
            <person name="Horst K."/>
            <person name="Roberts K.M."/>
            <person name="Hatch B."/>
            <person name="Smith H.O."/>
            <person name="Venter J.C."/>
        </authorList>
    </citation>
    <scope>NUCLEOTIDE SEQUENCE [LARGE SCALE GENOMIC DNA]</scope>
    <source>
        <strain>ATCC 35210 / DSM 4680 / CIP 102532 / B31</strain>
    </source>
</reference>
<keyword id="KW-1185">Reference proteome</keyword>
<keyword id="KW-0694">RNA-binding</keyword>
<keyword id="KW-0804">Transcription</keyword>
<keyword id="KW-0889">Transcription antitermination</keyword>
<keyword id="KW-0805">Transcription regulation</keyword>
<comment type="function">
    <text evidence="1">Involved in transcription antitermination. Required for transcription of ribosomal RNA (rRNA) genes. Binds specifically to the boxA antiterminator sequence of the ribosomal RNA (rrn) operons.</text>
</comment>
<comment type="similarity">
    <text evidence="1 2">Belongs to the NusB family.</text>
</comment>
<sequence>MHEVRVLAFQKIYSIDINQSAMDDIFDIFNIEDKDLDIENESIKSFYSSLVIGTFDNLEHIDSLIRDISLNWSLERMDKVDLAILRMGVYSLKFQNFENSKRAIIDEAILIAKKYGSKNSYKFINGILDALLKNMESGIEKK</sequence>
<name>NUSB_BORBU</name>
<protein>
    <recommendedName>
        <fullName evidence="1">Transcription antitermination protein NusB</fullName>
    </recommendedName>
    <alternativeName>
        <fullName evidence="1">Antitermination factor NusB</fullName>
    </alternativeName>
</protein>
<organism>
    <name type="scientific">Borreliella burgdorferi (strain ATCC 35210 / DSM 4680 / CIP 102532 / B31)</name>
    <name type="common">Borrelia burgdorferi</name>
    <dbReference type="NCBI Taxonomy" id="224326"/>
    <lineage>
        <taxon>Bacteria</taxon>
        <taxon>Pseudomonadati</taxon>
        <taxon>Spirochaetota</taxon>
        <taxon>Spirochaetia</taxon>
        <taxon>Spirochaetales</taxon>
        <taxon>Borreliaceae</taxon>
        <taxon>Borreliella</taxon>
    </lineage>
</organism>
<evidence type="ECO:0000255" key="1">
    <source>
        <dbReference type="HAMAP-Rule" id="MF_00073"/>
    </source>
</evidence>
<evidence type="ECO:0000305" key="2"/>
<gene>
    <name evidence="1" type="primary">nusB</name>
    <name type="ordered locus">BB_0107</name>
</gene>
<accession>O51134</accession>
<proteinExistence type="inferred from homology"/>
<dbReference type="EMBL" id="AE000783">
    <property type="protein sequence ID" value="AAC66498.2"/>
    <property type="molecule type" value="Genomic_DNA"/>
</dbReference>
<dbReference type="PIR" id="C70113">
    <property type="entry name" value="C70113"/>
</dbReference>
<dbReference type="RefSeq" id="NP_212241.2">
    <property type="nucleotide sequence ID" value="NC_001318.1"/>
</dbReference>
<dbReference type="RefSeq" id="WP_010889684.1">
    <property type="nucleotide sequence ID" value="NC_001318.1"/>
</dbReference>
<dbReference type="SMR" id="O51134"/>
<dbReference type="STRING" id="224326.BB_0107"/>
<dbReference type="PaxDb" id="224326-BB_0107"/>
<dbReference type="EnsemblBacteria" id="AAC66498">
    <property type="protein sequence ID" value="AAC66498"/>
    <property type="gene ID" value="BB_0107"/>
</dbReference>
<dbReference type="KEGG" id="bbu:BB_0107"/>
<dbReference type="PATRIC" id="fig|224326.49.peg.505"/>
<dbReference type="HOGENOM" id="CLU_087843_3_1_12"/>
<dbReference type="OrthoDB" id="9811381at2"/>
<dbReference type="Proteomes" id="UP000001807">
    <property type="component" value="Chromosome"/>
</dbReference>
<dbReference type="GO" id="GO:0005829">
    <property type="term" value="C:cytosol"/>
    <property type="evidence" value="ECO:0007669"/>
    <property type="project" value="TreeGrafter"/>
</dbReference>
<dbReference type="GO" id="GO:0003723">
    <property type="term" value="F:RNA binding"/>
    <property type="evidence" value="ECO:0007669"/>
    <property type="project" value="UniProtKB-UniRule"/>
</dbReference>
<dbReference type="GO" id="GO:0006353">
    <property type="term" value="P:DNA-templated transcription termination"/>
    <property type="evidence" value="ECO:0007669"/>
    <property type="project" value="UniProtKB-UniRule"/>
</dbReference>
<dbReference type="GO" id="GO:0031564">
    <property type="term" value="P:transcription antitermination"/>
    <property type="evidence" value="ECO:0007669"/>
    <property type="project" value="UniProtKB-KW"/>
</dbReference>
<dbReference type="CDD" id="cd00619">
    <property type="entry name" value="Terminator_NusB"/>
    <property type="match status" value="1"/>
</dbReference>
<dbReference type="Gene3D" id="1.10.940.10">
    <property type="entry name" value="NusB-like"/>
    <property type="match status" value="1"/>
</dbReference>
<dbReference type="HAMAP" id="MF_00073">
    <property type="entry name" value="NusB"/>
    <property type="match status" value="1"/>
</dbReference>
<dbReference type="InterPro" id="IPR035926">
    <property type="entry name" value="NusB-like_sf"/>
</dbReference>
<dbReference type="InterPro" id="IPR011605">
    <property type="entry name" value="NusB_fam"/>
</dbReference>
<dbReference type="InterPro" id="IPR006027">
    <property type="entry name" value="NusB_RsmB_TIM44"/>
</dbReference>
<dbReference type="NCBIfam" id="TIGR01951">
    <property type="entry name" value="nusB"/>
    <property type="match status" value="1"/>
</dbReference>
<dbReference type="PANTHER" id="PTHR11078:SF3">
    <property type="entry name" value="ANTITERMINATION NUSB DOMAIN-CONTAINING PROTEIN"/>
    <property type="match status" value="1"/>
</dbReference>
<dbReference type="PANTHER" id="PTHR11078">
    <property type="entry name" value="N UTILIZATION SUBSTANCE PROTEIN B-RELATED"/>
    <property type="match status" value="1"/>
</dbReference>
<dbReference type="Pfam" id="PF01029">
    <property type="entry name" value="NusB"/>
    <property type="match status" value="1"/>
</dbReference>
<dbReference type="SUPFAM" id="SSF48013">
    <property type="entry name" value="NusB-like"/>
    <property type="match status" value="1"/>
</dbReference>
<feature type="chain" id="PRO_0000176511" description="Transcription antitermination protein NusB">
    <location>
        <begin position="1"/>
        <end position="142"/>
    </location>
</feature>